<gene>
    <name evidence="4" type="primary">LYS5</name>
    <name type="ordered locus">YGL154C</name>
    <name type="ORF">G1867</name>
</gene>
<feature type="chain" id="PRO_0000175742" description="L-aminoadipate-semialdehyde dehydrogenase-phosphopantetheinyl transferase">
    <location>
        <begin position="1"/>
        <end position="272"/>
    </location>
</feature>
<organism>
    <name type="scientific">Saccharomyces cerevisiae (strain ATCC 204508 / S288c)</name>
    <name type="common">Baker's yeast</name>
    <dbReference type="NCBI Taxonomy" id="559292"/>
    <lineage>
        <taxon>Eukaryota</taxon>
        <taxon>Fungi</taxon>
        <taxon>Dikarya</taxon>
        <taxon>Ascomycota</taxon>
        <taxon>Saccharomycotina</taxon>
        <taxon>Saccharomycetes</taxon>
        <taxon>Saccharomycetales</taxon>
        <taxon>Saccharomycetaceae</taxon>
        <taxon>Saccharomyces</taxon>
    </lineage>
</organism>
<dbReference type="EC" id="2.7.8.7" evidence="1"/>
<dbReference type="EMBL" id="U32586">
    <property type="protein sequence ID" value="AAC49449.1"/>
    <property type="molecule type" value="Genomic_DNA"/>
</dbReference>
<dbReference type="EMBL" id="Z48618">
    <property type="status" value="NOT_ANNOTATED_CDS"/>
    <property type="molecule type" value="Genomic_DNA"/>
</dbReference>
<dbReference type="EMBL" id="Z72676">
    <property type="protein sequence ID" value="CAA96866.1"/>
    <property type="molecule type" value="Genomic_DNA"/>
</dbReference>
<dbReference type="EMBL" id="AY692861">
    <property type="protein sequence ID" value="AAT92880.1"/>
    <property type="molecule type" value="Genomic_DNA"/>
</dbReference>
<dbReference type="EMBL" id="BK006941">
    <property type="protein sequence ID" value="DAA07958.1"/>
    <property type="molecule type" value="Genomic_DNA"/>
</dbReference>
<dbReference type="PIR" id="S59762">
    <property type="entry name" value="S59762"/>
</dbReference>
<dbReference type="RefSeq" id="NP_011361.1">
    <property type="nucleotide sequence ID" value="NM_001181019.1"/>
</dbReference>
<dbReference type="SMR" id="P50113"/>
<dbReference type="BioGRID" id="33100">
    <property type="interactions" value="12"/>
</dbReference>
<dbReference type="DIP" id="DIP-1426N"/>
<dbReference type="FunCoup" id="P50113">
    <property type="interactions" value="55"/>
</dbReference>
<dbReference type="IntAct" id="P50113">
    <property type="interactions" value="3"/>
</dbReference>
<dbReference type="MINT" id="P50113"/>
<dbReference type="STRING" id="4932.YGL154C"/>
<dbReference type="PaxDb" id="4932-YGL154C"/>
<dbReference type="PeptideAtlas" id="P50113"/>
<dbReference type="EnsemblFungi" id="YGL154C_mRNA">
    <property type="protein sequence ID" value="YGL154C"/>
    <property type="gene ID" value="YGL154C"/>
</dbReference>
<dbReference type="GeneID" id="852723"/>
<dbReference type="KEGG" id="sce:YGL154C"/>
<dbReference type="AGR" id="SGD:S000003122"/>
<dbReference type="SGD" id="S000003122">
    <property type="gene designation" value="LYS5"/>
</dbReference>
<dbReference type="VEuPathDB" id="FungiDB:YGL154C"/>
<dbReference type="eggNOG" id="KOG0945">
    <property type="taxonomic scope" value="Eukaryota"/>
</dbReference>
<dbReference type="HOGENOM" id="CLU_075352_1_0_1"/>
<dbReference type="InParanoid" id="P50113"/>
<dbReference type="OMA" id="PWAGIFV"/>
<dbReference type="OrthoDB" id="26719at2759"/>
<dbReference type="BioCyc" id="YEAST:G3O-30645-MONOMER"/>
<dbReference type="SABIO-RK" id="P50113"/>
<dbReference type="BioGRID-ORCS" id="852723">
    <property type="hits" value="3 hits in 10 CRISPR screens"/>
</dbReference>
<dbReference type="PRO" id="PR:P50113"/>
<dbReference type="Proteomes" id="UP000002311">
    <property type="component" value="Chromosome VII"/>
</dbReference>
<dbReference type="RNAct" id="P50113">
    <property type="molecule type" value="protein"/>
</dbReference>
<dbReference type="GO" id="GO:0005737">
    <property type="term" value="C:cytoplasm"/>
    <property type="evidence" value="ECO:0000304"/>
    <property type="project" value="SGD"/>
</dbReference>
<dbReference type="GO" id="GO:0005829">
    <property type="term" value="C:cytosol"/>
    <property type="evidence" value="ECO:0000318"/>
    <property type="project" value="GO_Central"/>
</dbReference>
<dbReference type="GO" id="GO:0008897">
    <property type="term" value="F:holo-[acyl-carrier-protein] synthase activity"/>
    <property type="evidence" value="ECO:0000314"/>
    <property type="project" value="SGD"/>
</dbReference>
<dbReference type="GO" id="GO:0000287">
    <property type="term" value="F:magnesium ion binding"/>
    <property type="evidence" value="ECO:0007669"/>
    <property type="project" value="InterPro"/>
</dbReference>
<dbReference type="GO" id="GO:0019878">
    <property type="term" value="P:lysine biosynthetic process via aminoadipic acid"/>
    <property type="evidence" value="ECO:0000315"/>
    <property type="project" value="SGD"/>
</dbReference>
<dbReference type="Gene3D" id="3.90.470.20">
    <property type="entry name" value="4'-phosphopantetheinyl transferase domain"/>
    <property type="match status" value="2"/>
</dbReference>
<dbReference type="InterPro" id="IPR008278">
    <property type="entry name" value="4-PPantetheinyl_Trfase_dom"/>
</dbReference>
<dbReference type="InterPro" id="IPR037143">
    <property type="entry name" value="4-PPantetheinyl_Trfase_dom_sf"/>
</dbReference>
<dbReference type="InterPro" id="IPR050559">
    <property type="entry name" value="P-Pant_transferase_sf"/>
</dbReference>
<dbReference type="PANTHER" id="PTHR12215:SF10">
    <property type="entry name" value="L-AMINOADIPATE-SEMIALDEHYDE DEHYDROGENASE-PHOSPHOPANTETHEINYL TRANSFERASE"/>
    <property type="match status" value="1"/>
</dbReference>
<dbReference type="PANTHER" id="PTHR12215">
    <property type="entry name" value="PHOSPHOPANTETHEINE TRANSFERASE"/>
    <property type="match status" value="1"/>
</dbReference>
<dbReference type="Pfam" id="PF01648">
    <property type="entry name" value="ACPS"/>
    <property type="match status" value="1"/>
</dbReference>
<dbReference type="SUPFAM" id="SSF56214">
    <property type="entry name" value="4'-phosphopantetheinyl transferase"/>
    <property type="match status" value="2"/>
</dbReference>
<evidence type="ECO:0000269" key="1">
    <source>
    </source>
</evidence>
<evidence type="ECO:0000269" key="2">
    <source>
    </source>
</evidence>
<evidence type="ECO:0000303" key="3">
    <source>
    </source>
</evidence>
<evidence type="ECO:0000303" key="4">
    <source>
    </source>
</evidence>
<evidence type="ECO:0000305" key="5"/>
<protein>
    <recommendedName>
        <fullName evidence="3">L-aminoadipate-semialdehyde dehydrogenase-phosphopantetheinyl transferase</fullName>
        <shortName evidence="3">AASD-PPT</shortName>
        <ecNumber evidence="1">2.7.8.7</ecNumber>
    </recommendedName>
</protein>
<sequence>MVKTTEVVSEVSKVAGVRPWAGIFVVEIQEDILADEFTFEALMRTLPLASQARILNKKSFHDRCSNLCSQLLQLFGCSIVTGLNFQELKFDKGSFGKPFLDNNRFLPFSMTIGEQYVAMFLVKCVSTDEYQDVGIDIASPCNYGGREELELFKEVFSEREFNGLLKASDPCTIFTYLWSLKESYTKFTGTGLNTDLSLIDFGAISFFPAEGASMCITLDEVPLIFHSQWFNNEIVTICMPKSISDKINTNRPKLYNISLSTLIDYFIENDGL</sequence>
<keyword id="KW-1185">Reference proteome</keyword>
<keyword id="KW-0808">Transferase</keyword>
<proteinExistence type="evidence at protein level"/>
<reference key="1">
    <citation type="journal article" date="1996" name="Gene">
        <title>The LYS5 gene of Saccharomyces cerevisiae.</title>
        <authorList>
            <person name="Miller K.G."/>
            <person name="Bhattacharjee J.K."/>
        </authorList>
    </citation>
    <scope>NUCLEOTIDE SEQUENCE [GENOMIC DNA]</scope>
</reference>
<reference key="2">
    <citation type="journal article" date="1995" name="Yeast">
        <title>DNA sequence analysis of a 35 kb segment from Saccharomyces cerevisiae chromosome VII reveals 19 open reading frames including RAD54, ACE1/CUP2, PMR1, RCK1, AMS1 and CAL1/CDC43.</title>
        <authorList>
            <person name="James C.M."/>
            <person name="Indge K.J."/>
            <person name="Oliver S.G."/>
        </authorList>
    </citation>
    <scope>NUCLEOTIDE SEQUENCE [GENOMIC DNA]</scope>
</reference>
<reference key="3">
    <citation type="journal article" date="1997" name="Nature">
        <title>The nucleotide sequence of Saccharomyces cerevisiae chromosome VII.</title>
        <authorList>
            <person name="Tettelin H."/>
            <person name="Agostoni-Carbone M.L."/>
            <person name="Albermann K."/>
            <person name="Albers M."/>
            <person name="Arroyo J."/>
            <person name="Backes U."/>
            <person name="Barreiros T."/>
            <person name="Bertani I."/>
            <person name="Bjourson A.J."/>
            <person name="Brueckner M."/>
            <person name="Bruschi C.V."/>
            <person name="Carignani G."/>
            <person name="Castagnoli L."/>
            <person name="Cerdan E."/>
            <person name="Clemente M.L."/>
            <person name="Coblenz A."/>
            <person name="Coglievina M."/>
            <person name="Coissac E."/>
            <person name="Defoor E."/>
            <person name="Del Bino S."/>
            <person name="Delius H."/>
            <person name="Delneri D."/>
            <person name="de Wergifosse P."/>
            <person name="Dujon B."/>
            <person name="Durand P."/>
            <person name="Entian K.-D."/>
            <person name="Eraso P."/>
            <person name="Escribano V."/>
            <person name="Fabiani L."/>
            <person name="Fartmann B."/>
            <person name="Feroli F."/>
            <person name="Feuermann M."/>
            <person name="Frontali L."/>
            <person name="Garcia-Gonzalez M."/>
            <person name="Garcia-Saez M.I."/>
            <person name="Goffeau A."/>
            <person name="Guerreiro P."/>
            <person name="Hani J."/>
            <person name="Hansen M."/>
            <person name="Hebling U."/>
            <person name="Hernandez K."/>
            <person name="Heumann K."/>
            <person name="Hilger F."/>
            <person name="Hofmann B."/>
            <person name="Indge K.J."/>
            <person name="James C.M."/>
            <person name="Klima R."/>
            <person name="Koetter P."/>
            <person name="Kramer B."/>
            <person name="Kramer W."/>
            <person name="Lauquin G."/>
            <person name="Leuther H."/>
            <person name="Louis E.J."/>
            <person name="Maillier E."/>
            <person name="Marconi A."/>
            <person name="Martegani E."/>
            <person name="Mazon M.J."/>
            <person name="Mazzoni C."/>
            <person name="McReynolds A.D.K."/>
            <person name="Melchioretto P."/>
            <person name="Mewes H.-W."/>
            <person name="Minenkova O."/>
            <person name="Mueller-Auer S."/>
            <person name="Nawrocki A."/>
            <person name="Netter P."/>
            <person name="Neu R."/>
            <person name="Nombela C."/>
            <person name="Oliver S.G."/>
            <person name="Panzeri L."/>
            <person name="Paoluzi S."/>
            <person name="Plevani P."/>
            <person name="Portetelle D."/>
            <person name="Portillo F."/>
            <person name="Potier S."/>
            <person name="Purnelle B."/>
            <person name="Rieger M."/>
            <person name="Riles L."/>
            <person name="Rinaldi T."/>
            <person name="Robben J."/>
            <person name="Rodrigues-Pousada C."/>
            <person name="Rodriguez-Belmonte E."/>
            <person name="Rodriguez-Torres A.M."/>
            <person name="Rose M."/>
            <person name="Ruzzi M."/>
            <person name="Saliola M."/>
            <person name="Sanchez-Perez M."/>
            <person name="Schaefer B."/>
            <person name="Schaefer M."/>
            <person name="Scharfe M."/>
            <person name="Schmidheini T."/>
            <person name="Schreer A."/>
            <person name="Skala J."/>
            <person name="Souciet J.-L."/>
            <person name="Steensma H.Y."/>
            <person name="Talla E."/>
            <person name="Thierry A."/>
            <person name="Vandenbol M."/>
            <person name="van der Aart Q.J.M."/>
            <person name="Van Dyck L."/>
            <person name="Vanoni M."/>
            <person name="Verhasselt P."/>
            <person name="Voet M."/>
            <person name="Volckaert G."/>
            <person name="Wambutt R."/>
            <person name="Watson M.D."/>
            <person name="Weber N."/>
            <person name="Wedler E."/>
            <person name="Wedler H."/>
            <person name="Wipfli P."/>
            <person name="Wolf K."/>
            <person name="Wright L.F."/>
            <person name="Zaccaria P."/>
            <person name="Zimmermann M."/>
            <person name="Zollner A."/>
            <person name="Kleine K."/>
        </authorList>
    </citation>
    <scope>NUCLEOTIDE SEQUENCE [LARGE SCALE GENOMIC DNA]</scope>
    <source>
        <strain>ATCC 204508 / S288c</strain>
    </source>
</reference>
<reference key="4">
    <citation type="journal article" date="2014" name="G3 (Bethesda)">
        <title>The reference genome sequence of Saccharomyces cerevisiae: Then and now.</title>
        <authorList>
            <person name="Engel S.R."/>
            <person name="Dietrich F.S."/>
            <person name="Fisk D.G."/>
            <person name="Binkley G."/>
            <person name="Balakrishnan R."/>
            <person name="Costanzo M.C."/>
            <person name="Dwight S.S."/>
            <person name="Hitz B.C."/>
            <person name="Karra K."/>
            <person name="Nash R.S."/>
            <person name="Weng S."/>
            <person name="Wong E.D."/>
            <person name="Lloyd P."/>
            <person name="Skrzypek M.S."/>
            <person name="Miyasato S.R."/>
            <person name="Simison M."/>
            <person name="Cherry J.M."/>
        </authorList>
    </citation>
    <scope>GENOME REANNOTATION</scope>
    <source>
        <strain>ATCC 204508 / S288c</strain>
    </source>
</reference>
<reference key="5">
    <citation type="journal article" date="2007" name="Genome Res.">
        <title>Approaching a complete repository of sequence-verified protein-encoding clones for Saccharomyces cerevisiae.</title>
        <authorList>
            <person name="Hu Y."/>
            <person name="Rolfs A."/>
            <person name="Bhullar B."/>
            <person name="Murthy T.V.S."/>
            <person name="Zhu C."/>
            <person name="Berger M.F."/>
            <person name="Camargo A.A."/>
            <person name="Kelley F."/>
            <person name="McCarron S."/>
            <person name="Jepson D."/>
            <person name="Richardson A."/>
            <person name="Raphael J."/>
            <person name="Moreira D."/>
            <person name="Taycher E."/>
            <person name="Zuo D."/>
            <person name="Mohr S."/>
            <person name="Kane M.F."/>
            <person name="Williamson J."/>
            <person name="Simpson A.J.G."/>
            <person name="Bulyk M.L."/>
            <person name="Harlow E."/>
            <person name="Marsischky G."/>
            <person name="Kolodner R.D."/>
            <person name="LaBaer J."/>
        </authorList>
    </citation>
    <scope>NUCLEOTIDE SEQUENCE [GENOMIC DNA]</scope>
    <source>
        <strain>ATCC 204508 / S288c</strain>
    </source>
</reference>
<reference key="6">
    <citation type="journal article" date="1999" name="Biochemistry">
        <title>Lysine biosynthesis in Saccharomyces cerevisiae: mechanism of alpha-aminoadipate reductase (Lys2) involves posttranslational phosphopantetheinylation by Lys5.</title>
        <authorList>
            <person name="Ehmann D.E."/>
            <person name="Gehring A.M."/>
            <person name="Walsh C.T."/>
        </authorList>
    </citation>
    <scope>FUNCTION</scope>
    <scope>CATALYTIC ACTIVITY</scope>
    <scope>BIOPHYSICOCHEMICAL PROPERTIES</scope>
</reference>
<reference key="7">
    <citation type="journal article" date="2003" name="Nature">
        <title>Global analysis of protein expression in yeast.</title>
        <authorList>
            <person name="Ghaemmaghami S."/>
            <person name="Huh W.-K."/>
            <person name="Bower K."/>
            <person name="Howson R.W."/>
            <person name="Belle A."/>
            <person name="Dephoure N."/>
            <person name="O'Shea E.K."/>
            <person name="Weissman J.S."/>
        </authorList>
    </citation>
    <scope>LEVEL OF PROTEIN EXPRESSION [LARGE SCALE ANALYSIS]</scope>
</reference>
<name>LYS5_YEAST</name>
<accession>P50113</accession>
<accession>D6VTZ7</accession>
<comment type="function">
    <text evidence="1">Catalyzes the transfer of a 4'-phosphopantetheine moiety from coenzyme A to a serine residue of acceptor proteins, such as alpha-aminoadipate reductase. Necessary for alpha-aminoadipate reductase activity.</text>
</comment>
<comment type="catalytic activity">
    <reaction evidence="1">
        <text>apo-[ACP] + CoA = holo-[ACP] + adenosine 3',5'-bisphosphate + H(+)</text>
        <dbReference type="Rhea" id="RHEA:12068"/>
        <dbReference type="Rhea" id="RHEA-COMP:9685"/>
        <dbReference type="Rhea" id="RHEA-COMP:9690"/>
        <dbReference type="ChEBI" id="CHEBI:15378"/>
        <dbReference type="ChEBI" id="CHEBI:29999"/>
        <dbReference type="ChEBI" id="CHEBI:57287"/>
        <dbReference type="ChEBI" id="CHEBI:58343"/>
        <dbReference type="ChEBI" id="CHEBI:64479"/>
        <dbReference type="EC" id="2.7.8.7"/>
    </reaction>
</comment>
<comment type="biophysicochemical properties">
    <kinetics>
        <KM evidence="1">1 uM for CoA</KM>
        <KM evidence="1">1 uM for alpha-aminoadipate reductase PCP fragment</KM>
    </kinetics>
</comment>
<comment type="miscellaneous">
    <text evidence="2">Present with 623 molecules/cell in log phase SD medium.</text>
</comment>
<comment type="similarity">
    <text evidence="5">Belongs to the P-Pant transferase superfamily. AcpS family.</text>
</comment>